<protein>
    <recommendedName>
        <fullName evidence="1">Large ribosomal subunit protein bL20</fullName>
    </recommendedName>
    <alternativeName>
        <fullName evidence="2">50S ribosomal protein L20</fullName>
    </alternativeName>
</protein>
<reference key="1">
    <citation type="journal article" date="2006" name="J. Bacteriol.">
        <title>Pathogenomic sequence analysis of Bacillus cereus and Bacillus thuringiensis isolates closely related to Bacillus anthracis.</title>
        <authorList>
            <person name="Han C.S."/>
            <person name="Xie G."/>
            <person name="Challacombe J.F."/>
            <person name="Altherr M.R."/>
            <person name="Bhotika S.S."/>
            <person name="Bruce D."/>
            <person name="Campbell C.S."/>
            <person name="Campbell M.L."/>
            <person name="Chen J."/>
            <person name="Chertkov O."/>
            <person name="Cleland C."/>
            <person name="Dimitrijevic M."/>
            <person name="Doggett N.A."/>
            <person name="Fawcett J.J."/>
            <person name="Glavina T."/>
            <person name="Goodwin L.A."/>
            <person name="Hill K.K."/>
            <person name="Hitchcock P."/>
            <person name="Jackson P.J."/>
            <person name="Keim P."/>
            <person name="Kewalramani A.R."/>
            <person name="Longmire J."/>
            <person name="Lucas S."/>
            <person name="Malfatti S."/>
            <person name="McMurry K."/>
            <person name="Meincke L.J."/>
            <person name="Misra M."/>
            <person name="Moseman B.L."/>
            <person name="Mundt M."/>
            <person name="Munk A.C."/>
            <person name="Okinaka R.T."/>
            <person name="Parson-Quintana B."/>
            <person name="Reilly L.P."/>
            <person name="Richardson P."/>
            <person name="Robinson D.L."/>
            <person name="Rubin E."/>
            <person name="Saunders E."/>
            <person name="Tapia R."/>
            <person name="Tesmer J.G."/>
            <person name="Thayer N."/>
            <person name="Thompson L.S."/>
            <person name="Tice H."/>
            <person name="Ticknor L.O."/>
            <person name="Wills P.L."/>
            <person name="Brettin T.S."/>
            <person name="Gilna P."/>
        </authorList>
    </citation>
    <scope>NUCLEOTIDE SEQUENCE [LARGE SCALE GENOMIC DNA]</scope>
    <source>
        <strain>97-27</strain>
    </source>
</reference>
<feature type="chain" id="PRO_0000177117" description="Large ribosomal subunit protein bL20">
    <location>
        <begin position="1"/>
        <end position="118"/>
    </location>
</feature>
<proteinExistence type="inferred from homology"/>
<sequence length="118" mass="13612">MPRVKGGTVTRQRRKKVIKLAKGYYGSKNTLFKVANQQVMKSLMYAFRDRRQKKRDFRKLWITRINAAARMNGLSYSRLMHGLKNAGIEVNRKMLADLAVHDEKAFAELATVAKNNIN</sequence>
<organism>
    <name type="scientific">Bacillus thuringiensis subsp. konkukian (strain 97-27)</name>
    <dbReference type="NCBI Taxonomy" id="281309"/>
    <lineage>
        <taxon>Bacteria</taxon>
        <taxon>Bacillati</taxon>
        <taxon>Bacillota</taxon>
        <taxon>Bacilli</taxon>
        <taxon>Bacillales</taxon>
        <taxon>Bacillaceae</taxon>
        <taxon>Bacillus</taxon>
        <taxon>Bacillus cereus group</taxon>
    </lineage>
</organism>
<name>RL20_BACHK</name>
<accession>Q6HCV7</accession>
<evidence type="ECO:0000255" key="1">
    <source>
        <dbReference type="HAMAP-Rule" id="MF_00382"/>
    </source>
</evidence>
<evidence type="ECO:0000305" key="2"/>
<keyword id="KW-0687">Ribonucleoprotein</keyword>
<keyword id="KW-0689">Ribosomal protein</keyword>
<keyword id="KW-0694">RNA-binding</keyword>
<keyword id="KW-0699">rRNA-binding</keyword>
<comment type="function">
    <text evidence="1">Binds directly to 23S ribosomal RNA and is necessary for the in vitro assembly process of the 50S ribosomal subunit. It is not involved in the protein synthesizing functions of that subunit.</text>
</comment>
<comment type="similarity">
    <text evidence="1">Belongs to the bacterial ribosomal protein bL20 family.</text>
</comment>
<dbReference type="EMBL" id="AE017355">
    <property type="protein sequence ID" value="AAT63534.1"/>
    <property type="molecule type" value="Genomic_DNA"/>
</dbReference>
<dbReference type="RefSeq" id="WP_001138362.1">
    <property type="nucleotide sequence ID" value="NC_005957.1"/>
</dbReference>
<dbReference type="RefSeq" id="YP_038619.1">
    <property type="nucleotide sequence ID" value="NC_005957.1"/>
</dbReference>
<dbReference type="SMR" id="Q6HCV7"/>
<dbReference type="GeneID" id="93006537"/>
<dbReference type="KEGG" id="btk:BT9727_4304"/>
<dbReference type="PATRIC" id="fig|281309.8.peg.4587"/>
<dbReference type="HOGENOM" id="CLU_123265_0_1_9"/>
<dbReference type="PRO" id="PR:Q6HCV7"/>
<dbReference type="Proteomes" id="UP000001301">
    <property type="component" value="Chromosome"/>
</dbReference>
<dbReference type="GO" id="GO:1990904">
    <property type="term" value="C:ribonucleoprotein complex"/>
    <property type="evidence" value="ECO:0007669"/>
    <property type="project" value="UniProtKB-KW"/>
</dbReference>
<dbReference type="GO" id="GO:0005840">
    <property type="term" value="C:ribosome"/>
    <property type="evidence" value="ECO:0007669"/>
    <property type="project" value="UniProtKB-KW"/>
</dbReference>
<dbReference type="GO" id="GO:0019843">
    <property type="term" value="F:rRNA binding"/>
    <property type="evidence" value="ECO:0007669"/>
    <property type="project" value="UniProtKB-UniRule"/>
</dbReference>
<dbReference type="GO" id="GO:0003735">
    <property type="term" value="F:structural constituent of ribosome"/>
    <property type="evidence" value="ECO:0007669"/>
    <property type="project" value="InterPro"/>
</dbReference>
<dbReference type="GO" id="GO:0000027">
    <property type="term" value="P:ribosomal large subunit assembly"/>
    <property type="evidence" value="ECO:0007669"/>
    <property type="project" value="UniProtKB-UniRule"/>
</dbReference>
<dbReference type="GO" id="GO:0006412">
    <property type="term" value="P:translation"/>
    <property type="evidence" value="ECO:0007669"/>
    <property type="project" value="InterPro"/>
</dbReference>
<dbReference type="CDD" id="cd07026">
    <property type="entry name" value="Ribosomal_L20"/>
    <property type="match status" value="1"/>
</dbReference>
<dbReference type="FunFam" id="1.10.1900.20:FF:000001">
    <property type="entry name" value="50S ribosomal protein L20"/>
    <property type="match status" value="1"/>
</dbReference>
<dbReference type="Gene3D" id="6.10.160.10">
    <property type="match status" value="1"/>
</dbReference>
<dbReference type="Gene3D" id="1.10.1900.20">
    <property type="entry name" value="Ribosomal protein L20"/>
    <property type="match status" value="1"/>
</dbReference>
<dbReference type="HAMAP" id="MF_00382">
    <property type="entry name" value="Ribosomal_bL20"/>
    <property type="match status" value="1"/>
</dbReference>
<dbReference type="InterPro" id="IPR005813">
    <property type="entry name" value="Ribosomal_bL20"/>
</dbReference>
<dbReference type="InterPro" id="IPR049946">
    <property type="entry name" value="RIBOSOMAL_L20_CS"/>
</dbReference>
<dbReference type="InterPro" id="IPR035566">
    <property type="entry name" value="Ribosomal_protein_bL20_C"/>
</dbReference>
<dbReference type="NCBIfam" id="TIGR01032">
    <property type="entry name" value="rplT_bact"/>
    <property type="match status" value="1"/>
</dbReference>
<dbReference type="PANTHER" id="PTHR10986">
    <property type="entry name" value="39S RIBOSOMAL PROTEIN L20"/>
    <property type="match status" value="1"/>
</dbReference>
<dbReference type="Pfam" id="PF00453">
    <property type="entry name" value="Ribosomal_L20"/>
    <property type="match status" value="1"/>
</dbReference>
<dbReference type="PRINTS" id="PR00062">
    <property type="entry name" value="RIBOSOMALL20"/>
</dbReference>
<dbReference type="SUPFAM" id="SSF74731">
    <property type="entry name" value="Ribosomal protein L20"/>
    <property type="match status" value="1"/>
</dbReference>
<dbReference type="PROSITE" id="PS00937">
    <property type="entry name" value="RIBOSOMAL_L20"/>
    <property type="match status" value="1"/>
</dbReference>
<gene>
    <name evidence="1" type="primary">rplT</name>
    <name type="ordered locus">BT9727_4304</name>
</gene>